<sequence>MGSLANNIMVVGAVLAALVAGGSCGPPKVPPGPNITTNYNGKWLTARATWYGQPNGAGAPDNGGACGIKNVNLPPYSGMTACGNVPIFKDGKGCGSCYEVRCKEKPECSGNPVTVYITDMNYEPIAPYHFDLSGKAFGSLAKPGLNDKIRHCGIMDVEFRRVRCKYPAGQKIVFHIEKGCNPNYLAVLVKYVADDGDIVLMEIQDKLSAEWKPMKLSWGAIWRMDTAKALKGPFSIRLTSESGKKVIAKDVIPANWRPDAVYTSNVQFY</sequence>
<gene>
    <name type="primary">EXPB1</name>
    <name type="synonym">EXPB1A</name>
</gene>
<keyword id="KW-0002">3D-structure</keyword>
<keyword id="KW-0020">Allergen</keyword>
<keyword id="KW-0134">Cell wall</keyword>
<keyword id="KW-0961">Cell wall biogenesis/degradation</keyword>
<keyword id="KW-0903">Direct protein sequencing</keyword>
<keyword id="KW-1015">Disulfide bond</keyword>
<keyword id="KW-0325">Glycoprotein</keyword>
<keyword id="KW-0472">Membrane</keyword>
<keyword id="KW-1185">Reference proteome</keyword>
<keyword id="KW-0964">Secreted</keyword>
<keyword id="KW-0732">Signal</keyword>
<accession>P58738</accession>
<accession>Q84UA7</accession>
<proteinExistence type="evidence at protein level"/>
<evidence type="ECO:0000250" key="1"/>
<evidence type="ECO:0000255" key="2">
    <source>
        <dbReference type="PROSITE-ProRule" id="PRU00078"/>
    </source>
</evidence>
<evidence type="ECO:0000255" key="3">
    <source>
        <dbReference type="PROSITE-ProRule" id="PRU00079"/>
    </source>
</evidence>
<evidence type="ECO:0000269" key="4">
    <source>
    </source>
</evidence>
<evidence type="ECO:0000269" key="5">
    <source>
    </source>
</evidence>
<evidence type="ECO:0000269" key="6">
    <source>
    </source>
</evidence>
<evidence type="ECO:0000305" key="7"/>
<evidence type="ECO:0007829" key="8">
    <source>
        <dbReference type="PDB" id="2HCZ"/>
    </source>
</evidence>
<organism>
    <name type="scientific">Zea mays</name>
    <name type="common">Maize</name>
    <dbReference type="NCBI Taxonomy" id="4577"/>
    <lineage>
        <taxon>Eukaryota</taxon>
        <taxon>Viridiplantae</taxon>
        <taxon>Streptophyta</taxon>
        <taxon>Embryophyta</taxon>
        <taxon>Tracheophyta</taxon>
        <taxon>Spermatophyta</taxon>
        <taxon>Magnoliopsida</taxon>
        <taxon>Liliopsida</taxon>
        <taxon>Poales</taxon>
        <taxon>Poaceae</taxon>
        <taxon>PACMAD clade</taxon>
        <taxon>Panicoideae</taxon>
        <taxon>Andropogonodae</taxon>
        <taxon>Andropogoneae</taxon>
        <taxon>Tripsacinae</taxon>
        <taxon>Zea</taxon>
    </lineage>
</organism>
<name>EXPB1_MAIZE</name>
<protein>
    <recommendedName>
        <fullName>Expansin-B1</fullName>
    </recommendedName>
    <alternativeName>
        <fullName>Allergen Zea m 1d</fullName>
    </alternativeName>
    <alternativeName>
        <fullName>Beta-expansin-1a</fullName>
    </alternativeName>
    <alternativeName>
        <fullName>Pollen allergen Zea m 1</fullName>
    </alternativeName>
    <alternativeName>
        <fullName>ZmEXPB1</fullName>
    </alternativeName>
    <allergenName>Zea m 1</allergenName>
</protein>
<reference key="1">
    <citation type="journal article" date="2001" name="Plant Physiol.">
        <title>Analysis and expression of the alpha-expansin and beta-expansin gene families in maize.</title>
        <authorList>
            <person name="Wu Y."/>
            <person name="Meeley R.B."/>
            <person name="Cosgrove D.J."/>
        </authorList>
    </citation>
    <scope>NUCLEOTIDE SEQUENCE [MRNA]</scope>
</reference>
<reference key="2">
    <citation type="journal article" date="2003" name="Plant Physiol.">
        <title>Purification and characterization of four beta-expansins (Zea m 1 isoforms) from maize pollen.</title>
        <authorList>
            <person name="Li L.-C."/>
            <person name="Bedinger P.A."/>
            <person name="Volk C."/>
            <person name="Jones A.D."/>
            <person name="Cosgrove D.J."/>
        </authorList>
    </citation>
    <scope>NUCLEOTIDE SEQUENCE [MRNA]</scope>
    <scope>PROTEIN SEQUENCE OF 25-44</scope>
    <scope>FUNCTION</scope>
    <scope>TISSUE SPECIFICITY</scope>
    <scope>IDENTIFICATION BY MASS SPECTROMETRY</scope>
</reference>
<reference key="3">
    <citation type="journal article" date="1997" name="Proc. Natl. Acad. Sci. U.S.A.">
        <title>Group I allergens of grass pollen as cell wall-loosening agents.</title>
        <authorList>
            <person name="Cosgrove D.J."/>
            <person name="Bedinger P.A."/>
            <person name="Durachko D.M."/>
        </authorList>
    </citation>
    <scope>FUNCTION</scope>
</reference>
<reference key="4">
    <citation type="journal article" date="2004" name="Plant Mol. Biol.">
        <title>Nomenclature for members of the expansin superfamily of genes and proteins.</title>
        <authorList>
            <person name="Kende H."/>
            <person name="Bradford K.J."/>
            <person name="Brummell D.A."/>
            <person name="Cho H.-T."/>
            <person name="Cosgrove D.J."/>
            <person name="Fleming A.J."/>
            <person name="Gehring C."/>
            <person name="Lee Y."/>
            <person name="McQueen-Mason S.J."/>
            <person name="Rose J.K.C."/>
            <person name="Voesenek L.A.C."/>
        </authorList>
    </citation>
    <scope>NOMENCLATURE</scope>
</reference>
<reference key="5">
    <citation type="journal article" date="2006" name="Proc. Natl. Acad. Sci. U.S.A.">
        <title>Crystal structure and activities of EXPB1 (Zea m 1), a beta-expansin and group-1 pollen allergen from maize.</title>
        <authorList>
            <person name="Yennawar N.H."/>
            <person name="Li L.C."/>
            <person name="Dudzinski D.M."/>
            <person name="Tabuchi A."/>
            <person name="Cosgrove D.J."/>
        </authorList>
    </citation>
    <scope>X-RAY CRYSTALLOGRAPHY (2.75 ANGSTROMS) OF 25-269</scope>
    <scope>GLYCOSYLATION AT ASN-34</scope>
    <scope>DISULFIDE BONDS</scope>
</reference>
<dbReference type="EMBL" id="AF332174">
    <property type="protein sequence ID" value="AAK56124.1"/>
    <property type="molecule type" value="mRNA"/>
</dbReference>
<dbReference type="EMBL" id="AY197353">
    <property type="protein sequence ID" value="AAO45608.1"/>
    <property type="molecule type" value="mRNA"/>
</dbReference>
<dbReference type="RefSeq" id="NP_001288510.1">
    <property type="nucleotide sequence ID" value="NM_001301581.1"/>
</dbReference>
<dbReference type="RefSeq" id="XP_008659972.1">
    <property type="nucleotide sequence ID" value="XM_008661750.1"/>
</dbReference>
<dbReference type="PDB" id="2HCZ">
    <property type="method" value="X-ray"/>
    <property type="resolution" value="2.75 A"/>
    <property type="chains" value="X=25-269"/>
</dbReference>
<dbReference type="PDBsum" id="2HCZ"/>
<dbReference type="SMR" id="P58738"/>
<dbReference type="FunCoup" id="P58738">
    <property type="interactions" value="29"/>
</dbReference>
<dbReference type="STRING" id="4577.P58738"/>
<dbReference type="Allergome" id="680">
    <property type="allergen name" value="Zea m 1"/>
</dbReference>
<dbReference type="GlyCosmos" id="P58738">
    <property type="glycosylation" value="1 site, No reported glycans"/>
</dbReference>
<dbReference type="iPTMnet" id="P58738"/>
<dbReference type="PaxDb" id="4577-GRMZM2G146551_P02"/>
<dbReference type="EnsemblPlants" id="Zm00001eb391880_T001">
    <property type="protein sequence ID" value="Zm00001eb391880_P001"/>
    <property type="gene ID" value="Zm00001eb391880"/>
</dbReference>
<dbReference type="GeneID" id="103638968"/>
<dbReference type="GeneID" id="103638970"/>
<dbReference type="Gramene" id="Zm00001eb391880_T001">
    <property type="protein sequence ID" value="Zm00001eb391880_P001"/>
    <property type="gene ID" value="Zm00001eb391880"/>
</dbReference>
<dbReference type="KEGG" id="zma:103638968"/>
<dbReference type="KEGG" id="zma:103638970"/>
<dbReference type="MaizeGDB" id="403651"/>
<dbReference type="eggNOG" id="ENOG502QRTE">
    <property type="taxonomic scope" value="Eukaryota"/>
</dbReference>
<dbReference type="InParanoid" id="P58738"/>
<dbReference type="OMA" id="QIRCGAP"/>
<dbReference type="OrthoDB" id="5823761at2759"/>
<dbReference type="EvolutionaryTrace" id="P58738"/>
<dbReference type="Proteomes" id="UP000007305">
    <property type="component" value="Chromosome 9"/>
</dbReference>
<dbReference type="ExpressionAtlas" id="P58738">
    <property type="expression patterns" value="baseline"/>
</dbReference>
<dbReference type="GO" id="GO:0005576">
    <property type="term" value="C:extracellular region"/>
    <property type="evidence" value="ECO:0007669"/>
    <property type="project" value="UniProtKB-KW"/>
</dbReference>
<dbReference type="GO" id="GO:0016020">
    <property type="term" value="C:membrane"/>
    <property type="evidence" value="ECO:0007669"/>
    <property type="project" value="UniProtKB-SubCell"/>
</dbReference>
<dbReference type="GO" id="GO:0009828">
    <property type="term" value="P:plant-type cell wall loosening"/>
    <property type="evidence" value="ECO:0000314"/>
    <property type="project" value="UniProtKB"/>
</dbReference>
<dbReference type="GO" id="GO:0071669">
    <property type="term" value="P:plant-type cell wall organization or biogenesis"/>
    <property type="evidence" value="ECO:0000314"/>
    <property type="project" value="UniProtKB"/>
</dbReference>
<dbReference type="GO" id="GO:0019953">
    <property type="term" value="P:sexual reproduction"/>
    <property type="evidence" value="ECO:0007669"/>
    <property type="project" value="InterPro"/>
</dbReference>
<dbReference type="CDD" id="cd22275">
    <property type="entry name" value="DPBB_EXPB_N"/>
    <property type="match status" value="1"/>
</dbReference>
<dbReference type="Gene3D" id="2.60.40.760">
    <property type="entry name" value="Expansin, cellulose-binding-like domain"/>
    <property type="match status" value="1"/>
</dbReference>
<dbReference type="Gene3D" id="2.40.40.10">
    <property type="entry name" value="RlpA-like domain"/>
    <property type="match status" value="1"/>
</dbReference>
<dbReference type="InterPro" id="IPR007118">
    <property type="entry name" value="Expan_Lol_pI"/>
</dbReference>
<dbReference type="InterPro" id="IPR007112">
    <property type="entry name" value="Expansin/allergen_DPBB_dom"/>
</dbReference>
<dbReference type="InterPro" id="IPR007117">
    <property type="entry name" value="Expansin_CBD"/>
</dbReference>
<dbReference type="InterPro" id="IPR036749">
    <property type="entry name" value="Expansin_CBD_sf"/>
</dbReference>
<dbReference type="InterPro" id="IPR005795">
    <property type="entry name" value="LolPI"/>
</dbReference>
<dbReference type="InterPro" id="IPR009009">
    <property type="entry name" value="RlpA-like_DPBB"/>
</dbReference>
<dbReference type="InterPro" id="IPR036908">
    <property type="entry name" value="RlpA-like_sf"/>
</dbReference>
<dbReference type="PANTHER" id="PTHR31692">
    <property type="entry name" value="EXPANSIN-B3"/>
    <property type="match status" value="1"/>
</dbReference>
<dbReference type="PANTHER" id="PTHR31692:SF7">
    <property type="entry name" value="EXPANSIN-B9"/>
    <property type="match status" value="1"/>
</dbReference>
<dbReference type="Pfam" id="PF03330">
    <property type="entry name" value="DPBB_1"/>
    <property type="match status" value="1"/>
</dbReference>
<dbReference type="Pfam" id="PF01357">
    <property type="entry name" value="Expansin_C"/>
    <property type="match status" value="1"/>
</dbReference>
<dbReference type="PRINTS" id="PR01225">
    <property type="entry name" value="EXPANSNFAMLY"/>
</dbReference>
<dbReference type="PRINTS" id="PR00829">
    <property type="entry name" value="LOLP1ALLERGN"/>
</dbReference>
<dbReference type="SMART" id="SM00837">
    <property type="entry name" value="DPBB_1"/>
    <property type="match status" value="1"/>
</dbReference>
<dbReference type="SUPFAM" id="SSF50685">
    <property type="entry name" value="Barwin-like endoglucanases"/>
    <property type="match status" value="1"/>
</dbReference>
<dbReference type="SUPFAM" id="SSF49590">
    <property type="entry name" value="PHL pollen allergen"/>
    <property type="match status" value="1"/>
</dbReference>
<dbReference type="PROSITE" id="PS50843">
    <property type="entry name" value="EXPANSIN_CBD"/>
    <property type="match status" value="1"/>
</dbReference>
<dbReference type="PROSITE" id="PS50842">
    <property type="entry name" value="EXPANSIN_EG45"/>
    <property type="match status" value="1"/>
</dbReference>
<feature type="signal peptide" evidence="4">
    <location>
        <begin position="1"/>
        <end position="24"/>
    </location>
</feature>
<feature type="chain" id="PRO_0000008724" description="Expansin-B1">
    <location>
        <begin position="25"/>
        <end position="269"/>
    </location>
</feature>
<feature type="domain" description="Expansin-like EG45" evidence="3">
    <location>
        <begin position="63"/>
        <end position="169"/>
    </location>
</feature>
<feature type="domain" description="Expansin-like CBD" evidence="2">
    <location>
        <begin position="183"/>
        <end position="264"/>
    </location>
</feature>
<feature type="glycosylation site" description="N-linked (GlcNAc...) asparagine" evidence="5">
    <location>
        <position position="34"/>
    </location>
</feature>
<feature type="disulfide bond" evidence="3 5">
    <location>
        <begin position="66"/>
        <end position="94"/>
    </location>
</feature>
<feature type="disulfide bond" evidence="3 5">
    <location>
        <begin position="97"/>
        <end position="164"/>
    </location>
</feature>
<feature type="disulfide bond" evidence="3 5">
    <location>
        <begin position="102"/>
        <end position="108"/>
    </location>
</feature>
<feature type="sequence conflict" description="In Ref. 1; AAK56124." evidence="7" ref="1">
    <original>A</original>
    <variation>V</variation>
    <location>
        <position position="5"/>
    </location>
</feature>
<feature type="strand" evidence="8">
    <location>
        <begin position="44"/>
        <end position="50"/>
    </location>
</feature>
<feature type="turn" evidence="8">
    <location>
        <begin position="74"/>
        <end position="78"/>
    </location>
</feature>
<feature type="strand" evidence="8">
    <location>
        <begin position="80"/>
        <end position="83"/>
    </location>
</feature>
<feature type="helix" evidence="8">
    <location>
        <begin position="85"/>
        <end position="88"/>
    </location>
</feature>
<feature type="helix" evidence="8">
    <location>
        <begin position="89"/>
        <end position="91"/>
    </location>
</feature>
<feature type="strand" evidence="8">
    <location>
        <begin position="97"/>
        <end position="101"/>
    </location>
</feature>
<feature type="strand" evidence="8">
    <location>
        <begin position="104"/>
        <end position="108"/>
    </location>
</feature>
<feature type="strand" evidence="8">
    <location>
        <begin position="113"/>
        <end position="120"/>
    </location>
</feature>
<feature type="strand" evidence="8">
    <location>
        <begin position="125"/>
        <end position="132"/>
    </location>
</feature>
<feature type="helix" evidence="8">
    <location>
        <begin position="134"/>
        <end position="139"/>
    </location>
</feature>
<feature type="helix" evidence="8">
    <location>
        <begin position="146"/>
        <end position="149"/>
    </location>
</feature>
<feature type="turn" evidence="8">
    <location>
        <begin position="150"/>
        <end position="152"/>
    </location>
</feature>
<feature type="strand" evidence="8">
    <location>
        <begin position="155"/>
        <end position="162"/>
    </location>
</feature>
<feature type="strand" evidence="8">
    <location>
        <begin position="173"/>
        <end position="176"/>
    </location>
</feature>
<feature type="strand" evidence="8">
    <location>
        <begin position="181"/>
        <end position="183"/>
    </location>
</feature>
<feature type="strand" evidence="8">
    <location>
        <begin position="187"/>
        <end position="190"/>
    </location>
</feature>
<feature type="strand" evidence="8">
    <location>
        <begin position="198"/>
        <end position="203"/>
    </location>
</feature>
<feature type="strand" evidence="8">
    <location>
        <begin position="206"/>
        <end position="208"/>
    </location>
</feature>
<feature type="strand" evidence="8">
    <location>
        <begin position="215"/>
        <end position="218"/>
    </location>
</feature>
<feature type="strand" evidence="8">
    <location>
        <begin position="221"/>
        <end position="223"/>
    </location>
</feature>
<feature type="strand" evidence="8">
    <location>
        <begin position="236"/>
        <end position="240"/>
    </location>
</feature>
<feature type="strand" evidence="8">
    <location>
        <begin position="245"/>
        <end position="249"/>
    </location>
</feature>
<feature type="strand" evidence="8">
    <location>
        <begin position="261"/>
        <end position="263"/>
    </location>
</feature>
<comment type="function">
    <text evidence="4 6">May aid fertilization by loosening the cell wall of the stigma and style, thereby facilitating penetration of the pollen tube. Acts selectively on grass cell walls, which are relatively poor in pectins and xyloglucans and rich in glucuronoarabinoxylans and (1-3),(1-4)-beta-D-glucans, when compared with cell walls of other angiosperms, including other monocots.</text>
</comment>
<comment type="subcellular location">
    <subcellularLocation>
        <location evidence="1">Secreted</location>
        <location evidence="1">Cell wall</location>
    </subcellularLocation>
    <subcellularLocation>
        <location evidence="1">Membrane</location>
        <topology evidence="1">Peripheral membrane protein</topology>
    </subcellularLocation>
</comment>
<comment type="tissue specificity">
    <text evidence="4">Expressed in anthers and pollen.</text>
</comment>
<comment type="developmental stage">
    <text>Expression low before and high after pollen mitosis.</text>
</comment>
<comment type="allergen">
    <text>Causes an allergic reaction in human. Causes maize pollen allergy.</text>
</comment>
<comment type="miscellaneous">
    <text>Beta-expansin 1 extension activity grass cell wall is enhanced by dithiothreitol (DTT) and EDTA, inhibited by Cu(2+) and Hg(2+), and resistant to denaturation by methanol boiling and heat treatments.</text>
</comment>
<comment type="similarity">
    <text evidence="7">Belongs to the expansin family. Expansin B subfamily.</text>
</comment>
<comment type="online information" name="EXPANSIN homepage">
    <link uri="https://www.dept.psu.edu/biology/groups/expansins/index.htm"/>
</comment>